<protein>
    <recommendedName>
        <fullName evidence="1">Large ribosomal subunit protein uL2</fullName>
    </recommendedName>
    <alternativeName>
        <fullName evidence="3">50S ribosomal protein L2</fullName>
    </alternativeName>
</protein>
<comment type="function">
    <text evidence="1">One of the primary rRNA binding proteins. Required for association of the 30S and 50S subunits to form the 70S ribosome, for tRNA binding and peptide bond formation. It has been suggested to have peptidyltransferase activity; this is somewhat controversial. Makes several contacts with the 16S rRNA in the 70S ribosome.</text>
</comment>
<comment type="subunit">
    <text evidence="1">Part of the 50S ribosomal subunit. Forms a bridge to the 30S subunit in the 70S ribosome.</text>
</comment>
<comment type="similarity">
    <text evidence="1">Belongs to the universal ribosomal protein uL2 family.</text>
</comment>
<keyword id="KW-1185">Reference proteome</keyword>
<keyword id="KW-0687">Ribonucleoprotein</keyword>
<keyword id="KW-0689">Ribosomal protein</keyword>
<keyword id="KW-0694">RNA-binding</keyword>
<keyword id="KW-0699">rRNA-binding</keyword>
<organism>
    <name type="scientific">Prochlorococcus marinus (strain MIT 9301)</name>
    <dbReference type="NCBI Taxonomy" id="167546"/>
    <lineage>
        <taxon>Bacteria</taxon>
        <taxon>Bacillati</taxon>
        <taxon>Cyanobacteriota</taxon>
        <taxon>Cyanophyceae</taxon>
        <taxon>Synechococcales</taxon>
        <taxon>Prochlorococcaceae</taxon>
        <taxon>Prochlorococcus</taxon>
    </lineage>
</organism>
<dbReference type="EMBL" id="CP000576">
    <property type="protein sequence ID" value="ABO18369.1"/>
    <property type="molecule type" value="Genomic_DNA"/>
</dbReference>
<dbReference type="RefSeq" id="WP_011863657.1">
    <property type="nucleotide sequence ID" value="NC_009091.1"/>
</dbReference>
<dbReference type="SMR" id="A3PF44"/>
<dbReference type="STRING" id="167546.P9301_17461"/>
<dbReference type="KEGG" id="pmg:P9301_17461"/>
<dbReference type="eggNOG" id="COG0090">
    <property type="taxonomic scope" value="Bacteria"/>
</dbReference>
<dbReference type="HOGENOM" id="CLU_036235_2_1_3"/>
<dbReference type="OrthoDB" id="9778722at2"/>
<dbReference type="Proteomes" id="UP000001430">
    <property type="component" value="Chromosome"/>
</dbReference>
<dbReference type="GO" id="GO:0015934">
    <property type="term" value="C:large ribosomal subunit"/>
    <property type="evidence" value="ECO:0007669"/>
    <property type="project" value="InterPro"/>
</dbReference>
<dbReference type="GO" id="GO:0019843">
    <property type="term" value="F:rRNA binding"/>
    <property type="evidence" value="ECO:0007669"/>
    <property type="project" value="UniProtKB-UniRule"/>
</dbReference>
<dbReference type="GO" id="GO:0003735">
    <property type="term" value="F:structural constituent of ribosome"/>
    <property type="evidence" value="ECO:0007669"/>
    <property type="project" value="InterPro"/>
</dbReference>
<dbReference type="GO" id="GO:0016740">
    <property type="term" value="F:transferase activity"/>
    <property type="evidence" value="ECO:0007669"/>
    <property type="project" value="InterPro"/>
</dbReference>
<dbReference type="GO" id="GO:0006412">
    <property type="term" value="P:translation"/>
    <property type="evidence" value="ECO:0007669"/>
    <property type="project" value="UniProtKB-UniRule"/>
</dbReference>
<dbReference type="FunFam" id="2.30.30.30:FF:000001">
    <property type="entry name" value="50S ribosomal protein L2"/>
    <property type="match status" value="1"/>
</dbReference>
<dbReference type="FunFam" id="2.40.50.140:FF:000003">
    <property type="entry name" value="50S ribosomal protein L2"/>
    <property type="match status" value="1"/>
</dbReference>
<dbReference type="FunFam" id="4.10.950.10:FF:000001">
    <property type="entry name" value="50S ribosomal protein L2"/>
    <property type="match status" value="1"/>
</dbReference>
<dbReference type="Gene3D" id="2.30.30.30">
    <property type="match status" value="1"/>
</dbReference>
<dbReference type="Gene3D" id="2.40.50.140">
    <property type="entry name" value="Nucleic acid-binding proteins"/>
    <property type="match status" value="1"/>
</dbReference>
<dbReference type="Gene3D" id="4.10.950.10">
    <property type="entry name" value="Ribosomal protein L2, domain 3"/>
    <property type="match status" value="1"/>
</dbReference>
<dbReference type="HAMAP" id="MF_01320_B">
    <property type="entry name" value="Ribosomal_uL2_B"/>
    <property type="match status" value="1"/>
</dbReference>
<dbReference type="InterPro" id="IPR012340">
    <property type="entry name" value="NA-bd_OB-fold"/>
</dbReference>
<dbReference type="InterPro" id="IPR014722">
    <property type="entry name" value="Rib_uL2_dom2"/>
</dbReference>
<dbReference type="InterPro" id="IPR002171">
    <property type="entry name" value="Ribosomal_uL2"/>
</dbReference>
<dbReference type="InterPro" id="IPR005880">
    <property type="entry name" value="Ribosomal_uL2_bac/org-type"/>
</dbReference>
<dbReference type="InterPro" id="IPR022669">
    <property type="entry name" value="Ribosomal_uL2_C"/>
</dbReference>
<dbReference type="InterPro" id="IPR022671">
    <property type="entry name" value="Ribosomal_uL2_CS"/>
</dbReference>
<dbReference type="InterPro" id="IPR014726">
    <property type="entry name" value="Ribosomal_uL2_dom3"/>
</dbReference>
<dbReference type="InterPro" id="IPR022666">
    <property type="entry name" value="Ribosomal_uL2_RNA-bd_dom"/>
</dbReference>
<dbReference type="InterPro" id="IPR008991">
    <property type="entry name" value="Translation_prot_SH3-like_sf"/>
</dbReference>
<dbReference type="NCBIfam" id="TIGR01171">
    <property type="entry name" value="rplB_bact"/>
    <property type="match status" value="1"/>
</dbReference>
<dbReference type="PANTHER" id="PTHR13691:SF5">
    <property type="entry name" value="LARGE RIBOSOMAL SUBUNIT PROTEIN UL2M"/>
    <property type="match status" value="1"/>
</dbReference>
<dbReference type="PANTHER" id="PTHR13691">
    <property type="entry name" value="RIBOSOMAL PROTEIN L2"/>
    <property type="match status" value="1"/>
</dbReference>
<dbReference type="Pfam" id="PF00181">
    <property type="entry name" value="Ribosomal_L2"/>
    <property type="match status" value="1"/>
</dbReference>
<dbReference type="Pfam" id="PF03947">
    <property type="entry name" value="Ribosomal_L2_C"/>
    <property type="match status" value="1"/>
</dbReference>
<dbReference type="PIRSF" id="PIRSF002158">
    <property type="entry name" value="Ribosomal_L2"/>
    <property type="match status" value="1"/>
</dbReference>
<dbReference type="SMART" id="SM01383">
    <property type="entry name" value="Ribosomal_L2"/>
    <property type="match status" value="1"/>
</dbReference>
<dbReference type="SMART" id="SM01382">
    <property type="entry name" value="Ribosomal_L2_C"/>
    <property type="match status" value="1"/>
</dbReference>
<dbReference type="SUPFAM" id="SSF50249">
    <property type="entry name" value="Nucleic acid-binding proteins"/>
    <property type="match status" value="1"/>
</dbReference>
<dbReference type="SUPFAM" id="SSF50104">
    <property type="entry name" value="Translation proteins SH3-like domain"/>
    <property type="match status" value="1"/>
</dbReference>
<dbReference type="PROSITE" id="PS00467">
    <property type="entry name" value="RIBOSOMAL_L2"/>
    <property type="match status" value="1"/>
</dbReference>
<gene>
    <name evidence="1" type="primary">rplB</name>
    <name evidence="1" type="synonym">rpl2</name>
    <name type="ordered locus">P9301_17461</name>
</gene>
<reference key="1">
    <citation type="journal article" date="2007" name="PLoS Genet.">
        <title>Patterns and implications of gene gain and loss in the evolution of Prochlorococcus.</title>
        <authorList>
            <person name="Kettler G.C."/>
            <person name="Martiny A.C."/>
            <person name="Huang K."/>
            <person name="Zucker J."/>
            <person name="Coleman M.L."/>
            <person name="Rodrigue S."/>
            <person name="Chen F."/>
            <person name="Lapidus A."/>
            <person name="Ferriera S."/>
            <person name="Johnson J."/>
            <person name="Steglich C."/>
            <person name="Church G.M."/>
            <person name="Richardson P."/>
            <person name="Chisholm S.W."/>
        </authorList>
    </citation>
    <scope>NUCLEOTIDE SEQUENCE [LARGE SCALE GENOMIC DNA]</scope>
    <source>
        <strain>MIT 9301</strain>
    </source>
</reference>
<feature type="chain" id="PRO_0000309982" description="Large ribosomal subunit protein uL2">
    <location>
        <begin position="1"/>
        <end position="287"/>
    </location>
</feature>
<feature type="region of interest" description="Disordered" evidence="2">
    <location>
        <begin position="221"/>
        <end position="287"/>
    </location>
</feature>
<feature type="compositionally biased region" description="Basic residues" evidence="2">
    <location>
        <begin position="258"/>
        <end position="287"/>
    </location>
</feature>
<sequence>MAIRKFKPYTPGTRQRVVTDFSEITSSKPERSLIVSKHRVKGRNNRGVITCRHRGGGHKRQYRLVDFRRDKRNINAKVAAIHYDPHRNARLALLFYEDGEKRYIIAPAGVKVGQNVISGESVPIEDGNAMPLSVMPLGSSVHCVELYAGRGAQMVRSAGASAQVMAKEGDYVALKLPSTEVRLVRKECYATLGEVGNSEIRNTSLGKAGRRRWLGRRPQVRGSVMNPCDHPHGGGEGKAPIGRAGPVTPWGKPALGLKTRKKNKPSNKLVVRRRRRISKRSRGGRDS</sequence>
<evidence type="ECO:0000255" key="1">
    <source>
        <dbReference type="HAMAP-Rule" id="MF_01320"/>
    </source>
</evidence>
<evidence type="ECO:0000256" key="2">
    <source>
        <dbReference type="SAM" id="MobiDB-lite"/>
    </source>
</evidence>
<evidence type="ECO:0000305" key="3"/>
<accession>A3PF44</accession>
<proteinExistence type="inferred from homology"/>
<name>RL2_PROM0</name>